<proteinExistence type="evidence at transcript level"/>
<organism>
    <name type="scientific">Aspergillus fumigatus (strain ATCC MYA-4609 / CBS 101355 / FGSC A1100 / Af293)</name>
    <name type="common">Neosartorya fumigata</name>
    <dbReference type="NCBI Taxonomy" id="330879"/>
    <lineage>
        <taxon>Eukaryota</taxon>
        <taxon>Fungi</taxon>
        <taxon>Dikarya</taxon>
        <taxon>Ascomycota</taxon>
        <taxon>Pezizomycotina</taxon>
        <taxon>Eurotiomycetes</taxon>
        <taxon>Eurotiomycetidae</taxon>
        <taxon>Eurotiales</taxon>
        <taxon>Aspergillaceae</taxon>
        <taxon>Aspergillus</taxon>
        <taxon>Aspergillus subgen. Fumigati</taxon>
    </lineage>
</organism>
<keyword id="KW-1003">Cell membrane</keyword>
<keyword id="KW-0342">GTP-binding</keyword>
<keyword id="KW-0378">Hydrolase</keyword>
<keyword id="KW-0449">Lipoprotein</keyword>
<keyword id="KW-0460">Magnesium</keyword>
<keyword id="KW-0472">Membrane</keyword>
<keyword id="KW-0479">Metal-binding</keyword>
<keyword id="KW-0488">Methylation</keyword>
<keyword id="KW-0547">Nucleotide-binding</keyword>
<keyword id="KW-0636">Prenylation</keyword>
<keyword id="KW-1185">Reference proteome</keyword>
<keyword id="KW-0843">Virulence</keyword>
<dbReference type="EC" id="3.6.5.-" evidence="1"/>
<dbReference type="EMBL" id="AAHF01000003">
    <property type="protein sequence ID" value="EAL92044.1"/>
    <property type="molecule type" value="Genomic_DNA"/>
</dbReference>
<dbReference type="RefSeq" id="XP_754082.1">
    <property type="nucleotide sequence ID" value="XM_748989.1"/>
</dbReference>
<dbReference type="SMR" id="E9R5S0"/>
<dbReference type="FunCoup" id="E9R5S0">
    <property type="interactions" value="122"/>
</dbReference>
<dbReference type="STRING" id="330879.E9R5S0"/>
<dbReference type="EnsemblFungi" id="EAL92044">
    <property type="protein sequence ID" value="EAL92044"/>
    <property type="gene ID" value="AFUA_5G05480"/>
</dbReference>
<dbReference type="GeneID" id="3511630"/>
<dbReference type="KEGG" id="afm:AFUA_5G05480"/>
<dbReference type="VEuPathDB" id="FungiDB:Afu5g05480"/>
<dbReference type="eggNOG" id="KOG0395">
    <property type="taxonomic scope" value="Eukaryota"/>
</dbReference>
<dbReference type="HOGENOM" id="CLU_041217_9_8_1"/>
<dbReference type="InParanoid" id="E9R5S0"/>
<dbReference type="OMA" id="SARHNEN"/>
<dbReference type="OrthoDB" id="5976022at2759"/>
<dbReference type="Proteomes" id="UP000002530">
    <property type="component" value="Chromosome 5"/>
</dbReference>
<dbReference type="GO" id="GO:0005886">
    <property type="term" value="C:plasma membrane"/>
    <property type="evidence" value="ECO:0000318"/>
    <property type="project" value="GO_Central"/>
</dbReference>
<dbReference type="GO" id="GO:0019003">
    <property type="term" value="F:GDP binding"/>
    <property type="evidence" value="ECO:0000318"/>
    <property type="project" value="GO_Central"/>
</dbReference>
<dbReference type="GO" id="GO:0005525">
    <property type="term" value="F:GTP binding"/>
    <property type="evidence" value="ECO:0000318"/>
    <property type="project" value="GO_Central"/>
</dbReference>
<dbReference type="GO" id="GO:0003924">
    <property type="term" value="F:GTPase activity"/>
    <property type="evidence" value="ECO:0000318"/>
    <property type="project" value="GO_Central"/>
</dbReference>
<dbReference type="GO" id="GO:0046872">
    <property type="term" value="F:metal ion binding"/>
    <property type="evidence" value="ECO:0007669"/>
    <property type="project" value="UniProtKB-KW"/>
</dbReference>
<dbReference type="GO" id="GO:0043936">
    <property type="term" value="P:asexual sporulation resulting in formation of a cellular spore"/>
    <property type="evidence" value="ECO:0000315"/>
    <property type="project" value="AspGD"/>
</dbReference>
<dbReference type="GO" id="GO:0006995">
    <property type="term" value="P:cellular response to nitrogen starvation"/>
    <property type="evidence" value="ECO:0000270"/>
    <property type="project" value="AspGD"/>
</dbReference>
<dbReference type="GO" id="GO:0043944">
    <property type="term" value="P:negative regulation of asexual sporulation resulting in formation of a cellular spore"/>
    <property type="evidence" value="ECO:0000315"/>
    <property type="project" value="AspGD"/>
</dbReference>
<dbReference type="GO" id="GO:0007264">
    <property type="term" value="P:small GTPase-mediated signal transduction"/>
    <property type="evidence" value="ECO:0000318"/>
    <property type="project" value="GO_Central"/>
</dbReference>
<dbReference type="CDD" id="cd04137">
    <property type="entry name" value="RheB"/>
    <property type="match status" value="1"/>
</dbReference>
<dbReference type="FunFam" id="3.40.50.300:FF:000273">
    <property type="entry name" value="GTP-binding protein Rheb homolog"/>
    <property type="match status" value="1"/>
</dbReference>
<dbReference type="Gene3D" id="3.40.50.300">
    <property type="entry name" value="P-loop containing nucleotide triphosphate hydrolases"/>
    <property type="match status" value="1"/>
</dbReference>
<dbReference type="InterPro" id="IPR027417">
    <property type="entry name" value="P-loop_NTPase"/>
</dbReference>
<dbReference type="InterPro" id="IPR005225">
    <property type="entry name" value="Small_GTP-bd"/>
</dbReference>
<dbReference type="InterPro" id="IPR001806">
    <property type="entry name" value="Small_GTPase"/>
</dbReference>
<dbReference type="InterPro" id="IPR020849">
    <property type="entry name" value="Small_GTPase_Ras-type"/>
</dbReference>
<dbReference type="NCBIfam" id="TIGR00231">
    <property type="entry name" value="small_GTP"/>
    <property type="match status" value="1"/>
</dbReference>
<dbReference type="PANTHER" id="PTHR24070">
    <property type="entry name" value="RAS, DI-RAS, AND RHEB FAMILY MEMBERS OF SMALL GTPASE SUPERFAMILY"/>
    <property type="match status" value="1"/>
</dbReference>
<dbReference type="Pfam" id="PF00071">
    <property type="entry name" value="Ras"/>
    <property type="match status" value="1"/>
</dbReference>
<dbReference type="PRINTS" id="PR00449">
    <property type="entry name" value="RASTRNSFRMNG"/>
</dbReference>
<dbReference type="SMART" id="SM00175">
    <property type="entry name" value="RAB"/>
    <property type="match status" value="1"/>
</dbReference>
<dbReference type="SMART" id="SM00173">
    <property type="entry name" value="RAS"/>
    <property type="match status" value="1"/>
</dbReference>
<dbReference type="SMART" id="SM00174">
    <property type="entry name" value="RHO"/>
    <property type="match status" value="1"/>
</dbReference>
<dbReference type="SUPFAM" id="SSF52540">
    <property type="entry name" value="P-loop containing nucleoside triphosphate hydrolases"/>
    <property type="match status" value="1"/>
</dbReference>
<dbReference type="PROSITE" id="PS51421">
    <property type="entry name" value="RAS"/>
    <property type="match status" value="1"/>
</dbReference>
<accession>E9R5S0</accession>
<feature type="chain" id="PRO_0000460450" description="Small monomeric GTPase RhbA">
    <location>
        <begin position="1"/>
        <end position="187"/>
    </location>
</feature>
<feature type="short sequence motif" description="Effector region" evidence="1">
    <location>
        <begin position="36"/>
        <end position="44"/>
    </location>
</feature>
<feature type="binding site" evidence="1">
    <location>
        <position position="17"/>
    </location>
    <ligand>
        <name>GDP</name>
        <dbReference type="ChEBI" id="CHEBI:58189"/>
    </ligand>
</feature>
<feature type="binding site" evidence="1">
    <location>
        <position position="17"/>
    </location>
    <ligand>
        <name>GTP</name>
        <dbReference type="ChEBI" id="CHEBI:37565"/>
    </ligand>
</feature>
<feature type="binding site" evidence="1">
    <location>
        <position position="18"/>
    </location>
    <ligand>
        <name>GDP</name>
        <dbReference type="ChEBI" id="CHEBI:58189"/>
    </ligand>
</feature>
<feature type="binding site" evidence="1">
    <location>
        <position position="19"/>
    </location>
    <ligand>
        <name>GDP</name>
        <dbReference type="ChEBI" id="CHEBI:58189"/>
    </ligand>
</feature>
<feature type="binding site" evidence="1">
    <location>
        <position position="19"/>
    </location>
    <ligand>
        <name>GTP</name>
        <dbReference type="ChEBI" id="CHEBI:37565"/>
    </ligand>
</feature>
<feature type="binding site" evidence="1">
    <location>
        <position position="20"/>
    </location>
    <ligand>
        <name>GDP</name>
        <dbReference type="ChEBI" id="CHEBI:58189"/>
    </ligand>
</feature>
<feature type="binding site" evidence="1">
    <location>
        <position position="20"/>
    </location>
    <ligand>
        <name>GTP</name>
        <dbReference type="ChEBI" id="CHEBI:37565"/>
    </ligand>
</feature>
<feature type="binding site" evidence="1">
    <location>
        <position position="21"/>
    </location>
    <ligand>
        <name>GDP</name>
        <dbReference type="ChEBI" id="CHEBI:58189"/>
    </ligand>
</feature>
<feature type="binding site" evidence="1">
    <location>
        <position position="21"/>
    </location>
    <ligand>
        <name>GTP</name>
        <dbReference type="ChEBI" id="CHEBI:37565"/>
    </ligand>
</feature>
<feature type="binding site" evidence="1">
    <location>
        <position position="21"/>
    </location>
    <ligand>
        <name>Mg(2+)</name>
        <dbReference type="ChEBI" id="CHEBI:18420"/>
    </ligand>
</feature>
<feature type="binding site" evidence="1">
    <location>
        <position position="22"/>
    </location>
    <ligand>
        <name>GDP</name>
        <dbReference type="ChEBI" id="CHEBI:58189"/>
    </ligand>
</feature>
<feature type="binding site" evidence="1">
    <location>
        <position position="22"/>
    </location>
    <ligand>
        <name>GTP</name>
        <dbReference type="ChEBI" id="CHEBI:37565"/>
    </ligand>
</feature>
<feature type="binding site" evidence="1">
    <location>
        <position position="33"/>
    </location>
    <ligand>
        <name>GDP</name>
        <dbReference type="ChEBI" id="CHEBI:58189"/>
    </ligand>
</feature>
<feature type="binding site" evidence="1">
    <location>
        <position position="33"/>
    </location>
    <ligand>
        <name>GTP</name>
        <dbReference type="ChEBI" id="CHEBI:37565"/>
    </ligand>
</feature>
<feature type="binding site" evidence="1">
    <location>
        <position position="34"/>
    </location>
    <ligand>
        <name>GDP</name>
        <dbReference type="ChEBI" id="CHEBI:58189"/>
    </ligand>
</feature>
<feature type="binding site" evidence="1">
    <location>
        <position position="36"/>
    </location>
    <ligand>
        <name>GTP</name>
        <dbReference type="ChEBI" id="CHEBI:37565"/>
    </ligand>
</feature>
<feature type="binding site" evidence="1">
    <location>
        <position position="39"/>
    </location>
    <ligand>
        <name>GTP</name>
        <dbReference type="ChEBI" id="CHEBI:37565"/>
    </ligand>
</feature>
<feature type="binding site" evidence="1">
    <location>
        <position position="39"/>
    </location>
    <ligand>
        <name>Mg(2+)</name>
        <dbReference type="ChEBI" id="CHEBI:18420"/>
    </ligand>
</feature>
<feature type="binding site" evidence="1">
    <location>
        <position position="120"/>
    </location>
    <ligand>
        <name>GDP</name>
        <dbReference type="ChEBI" id="CHEBI:58189"/>
    </ligand>
</feature>
<feature type="binding site" evidence="1">
    <location>
        <position position="120"/>
    </location>
    <ligand>
        <name>GTP</name>
        <dbReference type="ChEBI" id="CHEBI:37565"/>
    </ligand>
</feature>
<feature type="binding site" evidence="1">
    <location>
        <position position="123"/>
    </location>
    <ligand>
        <name>GDP</name>
        <dbReference type="ChEBI" id="CHEBI:58189"/>
    </ligand>
</feature>
<feature type="binding site" evidence="1">
    <location>
        <position position="123"/>
    </location>
    <ligand>
        <name>GTP</name>
        <dbReference type="ChEBI" id="CHEBI:37565"/>
    </ligand>
</feature>
<feature type="binding site" evidence="1">
    <location>
        <position position="152"/>
    </location>
    <ligand>
        <name>GDP</name>
        <dbReference type="ChEBI" id="CHEBI:58189"/>
    </ligand>
</feature>
<feature type="binding site" evidence="1">
    <location>
        <position position="152"/>
    </location>
    <ligand>
        <name>GTP</name>
        <dbReference type="ChEBI" id="CHEBI:37565"/>
    </ligand>
</feature>
<feature type="site" description="Important for autoinhibition of GTPase activity" evidence="1">
    <location>
        <position position="36"/>
    </location>
</feature>
<feature type="lipid moiety-binding region" description="S-farnesyl cysteine" evidence="1">
    <location>
        <position position="184"/>
    </location>
</feature>
<comment type="function">
    <text evidence="2 3 4 5">Small GTPase that acts as an allosteric activator of the canonical TOR pathway, an evolutionarily conserved central nutrient sensor that stimulates anabolic reactions and macromolecule biosynthesis to promote cellular biomass generation and growth (PubMed:12135576, PubMed:12704156). Plays a role in virulence (PubMed:11446528, PubMed:12704156, PubMed:16205968).</text>
</comment>
<comment type="catalytic activity">
    <reaction evidence="1">
        <text>GTP + H2O = GDP + phosphate + H(+)</text>
        <dbReference type="Rhea" id="RHEA:19669"/>
        <dbReference type="ChEBI" id="CHEBI:15377"/>
        <dbReference type="ChEBI" id="CHEBI:15378"/>
        <dbReference type="ChEBI" id="CHEBI:37565"/>
        <dbReference type="ChEBI" id="CHEBI:43474"/>
        <dbReference type="ChEBI" id="CHEBI:58189"/>
    </reaction>
    <physiologicalReaction direction="left-to-right" evidence="1">
        <dbReference type="Rhea" id="RHEA:19670"/>
    </physiologicalReaction>
</comment>
<comment type="activity regulation">
    <text evidence="1">Alternates between an inactive form bound to GDP and an active form bound to GTP.</text>
</comment>
<comment type="subcellular location">
    <subcellularLocation>
        <location evidence="1">Cell membrane</location>
        <topology evidence="1">Lipid-anchor</topology>
        <orientation evidence="1">Cytoplasmic side</orientation>
    </subcellularLocation>
</comment>
<comment type="induction">
    <text evidence="2 3 5">Expressed throughout the developmental cycle and induced by nitrogen starvation (PubMed:12135576). Expression is up-regulated when the organism is grown in cultures with the presence of human endothelial cells as well as during infection in mice (PubMed:11446528, PubMed:16205968).</text>
</comment>
<comment type="PTM">
    <text evidence="1">Farnesylation is important for efficiently activating mTORC1-mediated signaling.</text>
</comment>
<comment type="disruption phenotype">
    <text evidence="4">Reduces virulence in a mouse model of invasive pulmonary aspergillosis (PubMed:12704156). Impairs growth on poor nitrogen sources (PubMed:12704156). Exhibits increased uptake of arginine and leads to asexual development in submerged cultures, even under ammonium-excess conditions (PubMed:12704156). Also shows enhanced sensitivity to the TOR kinase inhibitor rapamycin (PubMed:12704156).</text>
</comment>
<comment type="similarity">
    <text evidence="7">Belongs to the small GTPase superfamily. Rheb family.</text>
</comment>
<protein>
    <recommendedName>
        <fullName evidence="6">Small monomeric GTPase RhbA</fullName>
        <ecNumber evidence="1">3.6.5.-</ecNumber>
    </recommendedName>
    <alternativeName>
        <fullName evidence="6">GTP-binding protein Rheb homolog A</fullName>
    </alternativeName>
    <alternativeName>
        <fullName evidence="6">GTP-binding protein rhbA</fullName>
    </alternativeName>
</protein>
<sequence>MPAAPKQRKIAIVGSRSVGKSSLTVRFVEHHFVESYYPTIENTFSRIIKYNGQDFATEIVDTAGQDEYSILNSKHFIGIHGYIIVYSVASRQSFDMVRVIRDKILNHLGADHVPLVVVGNKSDLKSEQRQVSLDEGRQLGEEFQCAFTEASARLDYNVTKAFDLMIGEIEKSQNPSQPAGGSKCILM</sequence>
<gene>
    <name evidence="6" type="primary">rhbA</name>
    <name type="ORF">AFUA_5G05480</name>
</gene>
<name>RHBA_ASPFU</name>
<reference key="1">
    <citation type="journal article" date="2005" name="Nature">
        <title>Genomic sequence of the pathogenic and allergenic filamentous fungus Aspergillus fumigatus.</title>
        <authorList>
            <person name="Nierman W.C."/>
            <person name="Pain A."/>
            <person name="Anderson M.J."/>
            <person name="Wortman J.R."/>
            <person name="Kim H.S."/>
            <person name="Arroyo J."/>
            <person name="Berriman M."/>
            <person name="Abe K."/>
            <person name="Archer D.B."/>
            <person name="Bermejo C."/>
            <person name="Bennett J.W."/>
            <person name="Bowyer P."/>
            <person name="Chen D."/>
            <person name="Collins M."/>
            <person name="Coulsen R."/>
            <person name="Davies R."/>
            <person name="Dyer P.S."/>
            <person name="Farman M.L."/>
            <person name="Fedorova N."/>
            <person name="Fedorova N.D."/>
            <person name="Feldblyum T.V."/>
            <person name="Fischer R."/>
            <person name="Fosker N."/>
            <person name="Fraser A."/>
            <person name="Garcia J.L."/>
            <person name="Garcia M.J."/>
            <person name="Goble A."/>
            <person name="Goldman G.H."/>
            <person name="Gomi K."/>
            <person name="Griffith-Jones S."/>
            <person name="Gwilliam R."/>
            <person name="Haas B.J."/>
            <person name="Haas H."/>
            <person name="Harris D.E."/>
            <person name="Horiuchi H."/>
            <person name="Huang J."/>
            <person name="Humphray S."/>
            <person name="Jimenez J."/>
            <person name="Keller N."/>
            <person name="Khouri H."/>
            <person name="Kitamoto K."/>
            <person name="Kobayashi T."/>
            <person name="Konzack S."/>
            <person name="Kulkarni R."/>
            <person name="Kumagai T."/>
            <person name="Lafton A."/>
            <person name="Latge J.-P."/>
            <person name="Li W."/>
            <person name="Lord A."/>
            <person name="Lu C."/>
            <person name="Majoros W.H."/>
            <person name="May G.S."/>
            <person name="Miller B.L."/>
            <person name="Mohamoud Y."/>
            <person name="Molina M."/>
            <person name="Monod M."/>
            <person name="Mouyna I."/>
            <person name="Mulligan S."/>
            <person name="Murphy L.D."/>
            <person name="O'Neil S."/>
            <person name="Paulsen I."/>
            <person name="Penalva M.A."/>
            <person name="Pertea M."/>
            <person name="Price C."/>
            <person name="Pritchard B.L."/>
            <person name="Quail M.A."/>
            <person name="Rabbinowitsch E."/>
            <person name="Rawlins N."/>
            <person name="Rajandream M.A."/>
            <person name="Reichard U."/>
            <person name="Renauld H."/>
            <person name="Robson G.D."/>
            <person name="Rodriguez de Cordoba S."/>
            <person name="Rodriguez-Pena J.M."/>
            <person name="Ronning C.M."/>
            <person name="Rutter S."/>
            <person name="Salzberg S.L."/>
            <person name="Sanchez M."/>
            <person name="Sanchez-Ferrero J.C."/>
            <person name="Saunders D."/>
            <person name="Seeger K."/>
            <person name="Squares R."/>
            <person name="Squares S."/>
            <person name="Takeuchi M."/>
            <person name="Tekaia F."/>
            <person name="Turner G."/>
            <person name="Vazquez de Aldana C.R."/>
            <person name="Weidman J."/>
            <person name="White O."/>
            <person name="Woodward J.R."/>
            <person name="Yu J.-H."/>
            <person name="Fraser C.M."/>
            <person name="Galagan J.E."/>
            <person name="Asai K."/>
            <person name="Machida M."/>
            <person name="Hall N."/>
            <person name="Barrell B.G."/>
            <person name="Denning D.W."/>
        </authorList>
    </citation>
    <scope>NUCLEOTIDE SEQUENCE [LARGE SCALE GENOMIC DNA]</scope>
    <source>
        <strain>ATCC MYA-4609 / CBS 101355 / FGSC A1100 / Af293</strain>
    </source>
</reference>
<reference key="2">
    <citation type="journal article" date="2001" name="Med. Mycol.">
        <title>Identification of genes of Aspergillus fumigatus up-regulated during growth on endothelial cells.</title>
        <authorList>
            <person name="Rhodes J.C."/>
            <person name="Oliver B.G."/>
            <person name="Askew D.S."/>
            <person name="Amlung T.W."/>
        </authorList>
    </citation>
    <scope>INDUCTION</scope>
    <scope>FUNCTION</scope>
</reference>
<reference key="3">
    <citation type="journal article" date="2002" name="Fungal Genet. Biol.">
        <title>Expression of the Aspergillus fumigatus rheb homologue, rhbA, is induced by nitrogen starvation.</title>
        <authorList>
            <person name="Panepinto J.C."/>
            <person name="Oliver B.G."/>
            <person name="Amlung T.W."/>
            <person name="Askew D.S."/>
            <person name="Rhodes J.C."/>
        </authorList>
    </citation>
    <scope>INDUCTION</scope>
    <scope>FUNCTION</scope>
</reference>
<reference key="4">
    <citation type="journal article" date="2003" name="Infect. Immun.">
        <title>Deletion of the Aspergillus fumigatus gene encoding the Ras-related protein RhbA reduces virulence in a model of Invasive pulmonary aspergillosis.</title>
        <authorList>
            <person name="Panepinto J.C."/>
            <person name="Oliver B.G."/>
            <person name="Fortwendel J.R."/>
            <person name="Smith D.L."/>
            <person name="Askew D.S."/>
            <person name="Rhodes J.C."/>
        </authorList>
    </citation>
    <scope>FUNCTION</scope>
    <scope>DISRUPTION PHENOTYPE</scope>
</reference>
<reference key="5">
    <citation type="journal article" date="2005" name="Mycopathologia">
        <title>Expression of Aspergillus fumigatus virulence-related genes detected in vitro and in vivo with competitive RT-PCR.</title>
        <authorList>
            <person name="Zhang L."/>
            <person name="Wang M."/>
            <person name="Li R."/>
            <person name="Calderone R."/>
        </authorList>
    </citation>
    <scope>INDUCTION</scope>
    <scope>FUNCTION</scope>
</reference>
<evidence type="ECO:0000250" key="1">
    <source>
        <dbReference type="UniProtKB" id="Q15382"/>
    </source>
</evidence>
<evidence type="ECO:0000269" key="2">
    <source>
    </source>
</evidence>
<evidence type="ECO:0000269" key="3">
    <source>
    </source>
</evidence>
<evidence type="ECO:0000269" key="4">
    <source>
    </source>
</evidence>
<evidence type="ECO:0000269" key="5">
    <source>
    </source>
</evidence>
<evidence type="ECO:0000303" key="6">
    <source>
    </source>
</evidence>
<evidence type="ECO:0000305" key="7"/>